<organism>
    <name type="scientific">Peanut clump virus (isolate 87/TGTA2)</name>
    <name type="common">PCV</name>
    <dbReference type="NCBI Taxonomy" id="652837"/>
    <lineage>
        <taxon>Viruses</taxon>
        <taxon>Riboviria</taxon>
        <taxon>Orthornavirae</taxon>
        <taxon>Kitrinoviricota</taxon>
        <taxon>Alsuviricetes</taxon>
        <taxon>Martellivirales</taxon>
        <taxon>Virgaviridae</taxon>
        <taxon>Pecluvirus</taxon>
        <taxon>Peanut clump virus</taxon>
    </lineage>
</organism>
<gene>
    <name type="ORF">ORF2</name>
</gene>
<comment type="function">
    <text evidence="1">Suppressor of RNA-mediated gene silencing, also known as post-transcriptional gene silencing (PTGS), a mechanism of plant viral defense that limits the accumulation of viral RNAs. Promotes viral cell-to-cell long distance movement.</text>
</comment>
<comment type="subunit">
    <text evidence="1">Homooligomer.</text>
</comment>
<comment type="subcellular location">
    <subcellularLocation>
        <location evidence="1">Host chloroplast envelope</location>
    </subcellularLocation>
    <subcellularLocation>
        <location evidence="1">Host endoplasmic reticulum</location>
    </subcellularLocation>
    <subcellularLocation>
        <location evidence="1">Host cell junction</location>
        <location evidence="1">Host plasmodesma</location>
    </subcellularLocation>
</comment>
<comment type="domain">
    <text evidence="1">The domains BM and C2 are involved in zinc-binding. Zinc-binding of each of the motifs is critical for the biological activity.</text>
</comment>
<comment type="domain">
    <text evidence="1">The coiled coil domain is probably involved in homooligomerization.</text>
</comment>
<comment type="PTM">
    <text evidence="1">Phosphorylated at Ser-79 by a host PKA-like kinase; the phosphorylation at this site seems to suppress host cell death.</text>
</comment>
<comment type="similarity">
    <text evidence="3">Belongs to the virgaviridae suppressor of RNA silencing family.</text>
</comment>
<comment type="caution">
    <text evidence="4">The publication has been retracted because some figures presented signs of inappropriate manipulation.</text>
</comment>
<protein>
    <recommendedName>
        <fullName>Suppressor of RNA silencing</fullName>
    </recommendedName>
    <alternativeName>
        <fullName>15kD cysteine rich protein</fullName>
        <shortName>P15</shortName>
    </alternativeName>
</protein>
<evidence type="ECO:0000250" key="1">
    <source>
        <dbReference type="UniProtKB" id="Q80874"/>
    </source>
</evidence>
<evidence type="ECO:0000255" key="2"/>
<evidence type="ECO:0000305" key="3"/>
<evidence type="ECO:0000305" key="4">
    <source>
    </source>
</evidence>
<reference key="1">
    <citation type="journal article" date="1994" name="J. Gen. Virol.">
        <title>Complete nucleotide sequence of peanut clump virus RNA 1 and relationships with other fungus-transmitted rod-shaped viruses.</title>
        <authorList>
            <person name="Herzog E."/>
            <person name="Guilley H."/>
            <person name="Manohar S.K."/>
            <person name="Dollet M."/>
            <person name="Richards K."/>
            <person name="Fritsch C."/>
            <person name="Jonard G."/>
        </authorList>
    </citation>
    <scope>NUCLEOTIDE SEQUENCE [GENOMIC RNA]</scope>
</reference>
<reference key="2">
    <citation type="journal article" date="2002" name="Plant J.">
        <title>Identification, subcellular localization and some properties of a cysteine-rich suppressor of gene silencing encoded by peanut clump virus.</title>
        <authorList>
            <person name="Dunoyer P."/>
            <person name="Pfeffer S."/>
            <person name="Fritsch C."/>
            <person name="Hemmer O."/>
            <person name="Voinnet O."/>
            <person name="Richards K.E."/>
        </authorList>
    </citation>
    <scope>RETRACTED PAPER</scope>
</reference>
<reference key="3">
    <citation type="journal article" date="2020" name="Plant J.">
        <authorList>
            <person name="Dunoyer P."/>
            <person name="Pfeffer S."/>
            <person name="Fritsch C."/>
            <person name="Hemmer O."/>
            <person name="Voinnet O."/>
            <person name="Richards K.E."/>
        </authorList>
    </citation>
    <scope>RETRACTION NOTICE OF PUBMED:11874569</scope>
</reference>
<keyword id="KW-0175">Coiled coil</keyword>
<keyword id="KW-1031">Host cell junction</keyword>
<keyword id="KW-1038">Host endoplasmic reticulum</keyword>
<keyword id="KW-0945">Host-virus interaction</keyword>
<keyword id="KW-1090">Inhibition of host innate immune response by virus</keyword>
<keyword id="KW-0479">Metal-binding</keyword>
<keyword id="KW-0597">Phosphoprotein</keyword>
<keyword id="KW-1185">Reference proteome</keyword>
<keyword id="KW-0941">Suppressor of RNA silencing</keyword>
<keyword id="KW-0899">Viral immunoevasion</keyword>
<keyword id="KW-0862">Zinc</keyword>
<feature type="chain" id="PRO_0000409148" description="Suppressor of RNA silencing">
    <location>
        <begin position="1"/>
        <end position="124"/>
    </location>
</feature>
<feature type="region of interest" description="Basic motif (BM)">
    <location>
        <begin position="1"/>
        <end position="14"/>
    </location>
</feature>
<feature type="region of interest" description="C-2" evidence="1">
    <location>
        <begin position="30"/>
        <end position="68"/>
    </location>
</feature>
<feature type="coiled-coil region" evidence="2">
    <location>
        <begin position="72"/>
        <end position="124"/>
    </location>
</feature>
<feature type="modified residue" description="Phosphoserine" evidence="1">
    <location>
        <position position="79"/>
    </location>
</feature>
<proteinExistence type="inferred from homology"/>
<dbReference type="EMBL" id="X78602">
    <property type="protein sequence ID" value="CAA55336.1"/>
    <property type="molecule type" value="Genomic_RNA"/>
</dbReference>
<dbReference type="SMR" id="Q84688"/>
<dbReference type="KEGG" id="vg:991044"/>
<dbReference type="Proteomes" id="UP000001668">
    <property type="component" value="Genome"/>
</dbReference>
<dbReference type="GO" id="GO:0044165">
    <property type="term" value="C:host cell endoplasmic reticulum"/>
    <property type="evidence" value="ECO:0007669"/>
    <property type="project" value="UniProtKB-SubCell"/>
</dbReference>
<dbReference type="GO" id="GO:0044219">
    <property type="term" value="C:host cell plasmodesma"/>
    <property type="evidence" value="ECO:0007669"/>
    <property type="project" value="UniProtKB-SubCell"/>
</dbReference>
<dbReference type="GO" id="GO:0046872">
    <property type="term" value="F:metal ion binding"/>
    <property type="evidence" value="ECO:0007669"/>
    <property type="project" value="UniProtKB-KW"/>
</dbReference>
<dbReference type="GO" id="GO:0052170">
    <property type="term" value="P:symbiont-mediated suppression of host innate immune response"/>
    <property type="evidence" value="ECO:0007669"/>
    <property type="project" value="UniProtKB-KW"/>
</dbReference>
<dbReference type="InterPro" id="IPR007609">
    <property type="entry name" value="Viral_P18"/>
</dbReference>
<dbReference type="Pfam" id="PF04521">
    <property type="entry name" value="Viral_P18"/>
    <property type="match status" value="1"/>
</dbReference>
<sequence>MPKSEFFREERKRRVALLGEDAVCKLNGVCGYSCGMPPAVEKVSVPADTEEDVYMLIFPYEQFCGEKHFKLYESLKDVSDDELKLRRLERQRETLLASFQQKLKRYDEKIALLSEKFKNLRSKL</sequence>
<organismHost>
    <name type="scientific">Arachis hypogaea</name>
    <name type="common">Peanut</name>
    <dbReference type="NCBI Taxonomy" id="3818"/>
</organismHost>
<organismHost>
    <name type="scientific">Setaria italica</name>
    <name type="common">Foxtail millet</name>
    <name type="synonym">Panicum italicum</name>
    <dbReference type="NCBI Taxonomy" id="4555"/>
</organismHost>
<organismHost>
    <name type="scientific">Sorghum arundinaceum</name>
    <dbReference type="NCBI Taxonomy" id="91525"/>
</organismHost>
<organismHost>
    <name type="scientific">Sorghum bicolor</name>
    <name type="common">Sorghum</name>
    <name type="synonym">Sorghum vulgare</name>
    <dbReference type="NCBI Taxonomy" id="4558"/>
</organismHost>
<name>VSR_PCV87</name>
<accession>Q84688</accession>